<sequence>MPKRDAPWRHMAGTSKVSRSGNYSPSGGMGSKSNKANAWVNRPMYRKPRIYRMYKSPDVPKGCEGPCKVQSYEQRHDISHVGKVMCISDITRGNGITHRVGKRFCVKSVYILGKIWMDENIMLKNHTNSVIFWLVRDRRPYGTPMDFGQVFNMFDNEPSTATVKNDLRDRYQVMHRFNAKVSGGQYASNEQALVRRFWKVNNHVVYNHQEAGKYENHTENALLLYMACTHASNPVYATLKIRIYFYDSITN</sequence>
<name>CAPSD_BGYMJ</name>
<keyword id="KW-0167">Capsid protein</keyword>
<keyword id="KW-0238">DNA-binding</keyword>
<keyword id="KW-1048">Host nucleus</keyword>
<keyword id="KW-0945">Host-virus interaction</keyword>
<keyword id="KW-0479">Metal-binding</keyword>
<keyword id="KW-1185">Reference proteome</keyword>
<keyword id="KW-1140">T=1 icosahedral capsid protein</keyword>
<keyword id="KW-1163">Viral penetration into host nucleus</keyword>
<keyword id="KW-0946">Virion</keyword>
<keyword id="KW-1160">Virus entry into host cell</keyword>
<keyword id="KW-0862">Zinc</keyword>
<keyword id="KW-0863">Zinc-finger</keyword>
<organismHost>
    <name type="scientific">Macroptilium lathyroides</name>
    <dbReference type="NCBI Taxonomy" id="260885"/>
</organismHost>
<organismHost>
    <name type="scientific">Malvastrum coromandelianum</name>
    <dbReference type="NCBI Taxonomy" id="108453"/>
</organismHost>
<organismHost>
    <name type="scientific">Phaseolus lunatus</name>
    <name type="common">Lima bean</name>
    <name type="synonym">Phaseolus limensis</name>
    <dbReference type="NCBI Taxonomy" id="3884"/>
</organismHost>
<organismHost>
    <name type="scientific">Phaseolus vulgaris</name>
    <name type="common">Kidney bean</name>
    <name type="synonym">French bean</name>
    <dbReference type="NCBI Taxonomy" id="3885"/>
</organismHost>
<feature type="chain" id="PRO_0000415529" description="Capsid protein">
    <location>
        <begin position="1"/>
        <end position="251"/>
    </location>
</feature>
<feature type="zinc finger region" evidence="2">
    <location>
        <begin position="54"/>
        <end position="71"/>
    </location>
</feature>
<feature type="region of interest" description="Disordered" evidence="3">
    <location>
        <begin position="1"/>
        <end position="35"/>
    </location>
</feature>
<feature type="short sequence motif" description="Bipartite nuclear localization signal">
    <location>
        <begin position="3"/>
        <end position="20"/>
    </location>
</feature>
<feature type="short sequence motif" description="Nuclear localization signal" evidence="2">
    <location>
        <begin position="35"/>
        <end position="49"/>
    </location>
</feature>
<feature type="short sequence motif" description="Nuclear export signal" evidence="2">
    <location>
        <begin position="96"/>
        <end position="117"/>
    </location>
</feature>
<feature type="short sequence motif" description="Bipartite nuclear localization signal" evidence="2">
    <location>
        <begin position="195"/>
        <end position="242"/>
    </location>
</feature>
<feature type="compositionally biased region" description="Polar residues" evidence="3">
    <location>
        <begin position="15"/>
        <end position="35"/>
    </location>
</feature>
<comment type="function">
    <text>Encapsidates the viral DNA into characteristic twinned ('geminate') particles. Binds the genomic viral ssDNA and shuttles it into and out of the cell nucleus. The CP of bipartite geminiviruses is not required for cell-to-cell or systemic movement.</text>
</comment>
<comment type="subunit">
    <text evidence="1">Homomultimer. Binds to single-stranded and double-stranded viral DNA. Interacts (via nuclear localization signals) with host importin alpha-1a (By similarity).</text>
</comment>
<comment type="subcellular location">
    <subcellularLocation>
        <location evidence="4">Virion</location>
    </subcellularLocation>
    <subcellularLocation>
        <location evidence="1">Host nucleus</location>
    </subcellularLocation>
    <text evidence="1">It is actively transported into the host cell nucleus. It may be exported out of the nucleus through a nuclear export signal for cell-to-cell movement and spread (By similarity).</text>
</comment>
<comment type="similarity">
    <text evidence="4">Belongs to the geminiviridae capsid protein family.</text>
</comment>
<protein>
    <recommendedName>
        <fullName>Capsid protein</fullName>
    </recommendedName>
    <alternativeName>
        <fullName>Coat protein</fullName>
        <shortName>CP</shortName>
    </alternativeName>
</protein>
<evidence type="ECO:0000250" key="1"/>
<evidence type="ECO:0000255" key="2"/>
<evidence type="ECO:0000256" key="3">
    <source>
        <dbReference type="SAM" id="MobiDB-lite"/>
    </source>
</evidence>
<evidence type="ECO:0000305" key="4"/>
<accession>P0CK34</accession>
<accession>P05152</accession>
<accession>Q67579</accession>
<organism>
    <name type="scientific">Bean golden yellow mosaic virus (isolate Puerto Rico-Japan)</name>
    <name type="common">BGYMV</name>
    <dbReference type="NCBI Taxonomy" id="222449"/>
    <lineage>
        <taxon>Viruses</taxon>
        <taxon>Monodnaviria</taxon>
        <taxon>Shotokuvirae</taxon>
        <taxon>Cressdnaviricota</taxon>
        <taxon>Repensiviricetes</taxon>
        <taxon>Geplafuvirales</taxon>
        <taxon>Geminiviridae</taxon>
        <taxon>Begomovirus</taxon>
        <taxon>Bean golden yellow mosaic virus</taxon>
    </lineage>
</organism>
<proteinExistence type="inferred from homology"/>
<reference key="1">
    <citation type="journal article" date="1987" name="Microbiol. Immunol.">
        <title>Total nucleotide sequences of the infectious cloned DNAs of bean golden mosaic virus.</title>
        <authorList>
            <person name="Morinaga T."/>
            <person name="Ikegami M."/>
            <person name="Shimotohno K."/>
            <person name="Miura K."/>
        </authorList>
    </citation>
    <scope>NUCLEOTIDE SEQUENCE [GENOMIC DNA]</scope>
</reference>
<dbReference type="EMBL" id="D00201">
    <property type="protein sequence ID" value="BAA00136.1"/>
    <property type="molecule type" value="Genomic_DNA"/>
</dbReference>
<dbReference type="RefSeq" id="NP_040772.1">
    <property type="nucleotide sequence ID" value="NC_001439.1"/>
</dbReference>
<dbReference type="SMR" id="P0CK34"/>
<dbReference type="GeneID" id="988088"/>
<dbReference type="KEGG" id="vg:988088"/>
<dbReference type="Proteomes" id="UP000008769">
    <property type="component" value="Genome"/>
</dbReference>
<dbReference type="GO" id="GO:0043657">
    <property type="term" value="C:host cell"/>
    <property type="evidence" value="ECO:0007669"/>
    <property type="project" value="GOC"/>
</dbReference>
<dbReference type="GO" id="GO:0042025">
    <property type="term" value="C:host cell nucleus"/>
    <property type="evidence" value="ECO:0007669"/>
    <property type="project" value="UniProtKB-SubCell"/>
</dbReference>
<dbReference type="GO" id="GO:0039615">
    <property type="term" value="C:T=1 icosahedral viral capsid"/>
    <property type="evidence" value="ECO:0007669"/>
    <property type="project" value="UniProtKB-KW"/>
</dbReference>
<dbReference type="GO" id="GO:0003677">
    <property type="term" value="F:DNA binding"/>
    <property type="evidence" value="ECO:0007669"/>
    <property type="project" value="UniProtKB-KW"/>
</dbReference>
<dbReference type="GO" id="GO:0005198">
    <property type="term" value="F:structural molecule activity"/>
    <property type="evidence" value="ECO:0007669"/>
    <property type="project" value="InterPro"/>
</dbReference>
<dbReference type="GO" id="GO:0008270">
    <property type="term" value="F:zinc ion binding"/>
    <property type="evidence" value="ECO:0007669"/>
    <property type="project" value="UniProtKB-KW"/>
</dbReference>
<dbReference type="GO" id="GO:0046718">
    <property type="term" value="P:symbiont entry into host cell"/>
    <property type="evidence" value="ECO:0007669"/>
    <property type="project" value="UniProtKB-KW"/>
</dbReference>
<dbReference type="GO" id="GO:0075732">
    <property type="term" value="P:viral penetration into host nucleus"/>
    <property type="evidence" value="ECO:0007669"/>
    <property type="project" value="UniProtKB-KW"/>
</dbReference>
<dbReference type="Gene3D" id="2.60.120.20">
    <property type="match status" value="1"/>
</dbReference>
<dbReference type="InterPro" id="IPR000650">
    <property type="entry name" value="Gem_coat_AR1"/>
</dbReference>
<dbReference type="InterPro" id="IPR000263">
    <property type="entry name" value="GV_A/BR1_coat"/>
</dbReference>
<dbReference type="InterPro" id="IPR029053">
    <property type="entry name" value="Viral_coat"/>
</dbReference>
<dbReference type="Pfam" id="PF00844">
    <property type="entry name" value="Gemini_coat"/>
    <property type="match status" value="1"/>
</dbReference>
<dbReference type="PRINTS" id="PR00224">
    <property type="entry name" value="GEMCOATAR1"/>
</dbReference>
<dbReference type="PRINTS" id="PR00223">
    <property type="entry name" value="GEMCOATARBR1"/>
</dbReference>
<gene>
    <name type="ORF">AR1</name>
    <name type="ORF">AV1</name>
</gene>